<organism>
    <name type="scientific">Mycobacterium tuberculosis (strain ATCC 25618 / H37Rv)</name>
    <dbReference type="NCBI Taxonomy" id="83332"/>
    <lineage>
        <taxon>Bacteria</taxon>
        <taxon>Bacillati</taxon>
        <taxon>Actinomycetota</taxon>
        <taxon>Actinomycetes</taxon>
        <taxon>Mycobacteriales</taxon>
        <taxon>Mycobacteriaceae</taxon>
        <taxon>Mycobacterium</taxon>
        <taxon>Mycobacterium tuberculosis complex</taxon>
    </lineage>
</organism>
<name>PRIA_MYCTU</name>
<evidence type="ECO:0000255" key="1">
    <source>
        <dbReference type="HAMAP-Rule" id="MF_00983"/>
    </source>
</evidence>
<evidence type="ECO:0000303" key="2">
    <source>
    </source>
</evidence>
<gene>
    <name evidence="1 2" type="primary">priA</name>
    <name type="ordered locus">Rv1402</name>
    <name type="ORF">MTCY21B4.19</name>
</gene>
<feature type="chain" id="PRO_0000102129" description="Probable replication restart protein PriA">
    <location>
        <begin position="1"/>
        <end position="655"/>
    </location>
</feature>
<feature type="binding site" evidence="1">
    <location>
        <position position="368"/>
    </location>
    <ligand>
        <name>Zn(2+)</name>
        <dbReference type="ChEBI" id="CHEBI:29105"/>
        <label>1</label>
    </ligand>
</feature>
<feature type="binding site" evidence="1">
    <location>
        <position position="371"/>
    </location>
    <ligand>
        <name>Zn(2+)</name>
        <dbReference type="ChEBI" id="CHEBI:29105"/>
        <label>1</label>
    </ligand>
</feature>
<feature type="binding site" evidence="1">
    <location>
        <position position="377"/>
    </location>
    <ligand>
        <name>Zn(2+)</name>
        <dbReference type="ChEBI" id="CHEBI:29105"/>
        <label>2</label>
    </ligand>
</feature>
<feature type="binding site" evidence="1">
    <location>
        <position position="380"/>
    </location>
    <ligand>
        <name>Zn(2+)</name>
        <dbReference type="ChEBI" id="CHEBI:29105"/>
        <label>2</label>
    </ligand>
</feature>
<feature type="binding site" evidence="1">
    <location>
        <position position="396"/>
    </location>
    <ligand>
        <name>Zn(2+)</name>
        <dbReference type="ChEBI" id="CHEBI:29105"/>
        <label>2</label>
    </ligand>
</feature>
<feature type="binding site" evidence="1">
    <location>
        <position position="399"/>
    </location>
    <ligand>
        <name>Zn(2+)</name>
        <dbReference type="ChEBI" id="CHEBI:29105"/>
        <label>2</label>
    </ligand>
</feature>
<feature type="binding site" evidence="1">
    <location>
        <position position="408"/>
    </location>
    <ligand>
        <name>Zn(2+)</name>
        <dbReference type="ChEBI" id="CHEBI:29105"/>
        <label>1</label>
    </ligand>
</feature>
<feature type="binding site" evidence="1">
    <location>
        <position position="411"/>
    </location>
    <ligand>
        <name>Zn(2+)</name>
        <dbReference type="ChEBI" id="CHEBI:29105"/>
        <label>1</label>
    </ligand>
</feature>
<protein>
    <recommendedName>
        <fullName evidence="1">Probable replication restart protein PriA</fullName>
    </recommendedName>
    <alternativeName>
        <fullName evidence="2">Probable primosomal protein n'</fullName>
    </alternativeName>
    <alternativeName>
        <fullName evidence="1">Putative ATP-dependent DNA helicase PriA</fullName>
    </alternativeName>
</protein>
<dbReference type="EMBL" id="AL123456">
    <property type="protein sequence ID" value="CCP44161.1"/>
    <property type="molecule type" value="Genomic_DNA"/>
</dbReference>
<dbReference type="PIR" id="G70900">
    <property type="entry name" value="G70900"/>
</dbReference>
<dbReference type="RefSeq" id="NP_215918.1">
    <property type="nucleotide sequence ID" value="NC_000962.3"/>
</dbReference>
<dbReference type="RefSeq" id="WP_003407285.1">
    <property type="nucleotide sequence ID" value="NZ_NVQJ01000038.1"/>
</dbReference>
<dbReference type="SMR" id="P9WMQ9"/>
<dbReference type="FunCoup" id="P9WMQ9">
    <property type="interactions" value="66"/>
</dbReference>
<dbReference type="STRING" id="83332.Rv1402"/>
<dbReference type="PaxDb" id="83332-Rv1402"/>
<dbReference type="DNASU" id="886716"/>
<dbReference type="GeneID" id="886716"/>
<dbReference type="KEGG" id="mtu:Rv1402"/>
<dbReference type="KEGG" id="mtv:RVBD_1402"/>
<dbReference type="TubercuList" id="Rv1402"/>
<dbReference type="eggNOG" id="COG1198">
    <property type="taxonomic scope" value="Bacteria"/>
</dbReference>
<dbReference type="InParanoid" id="P9WMQ9"/>
<dbReference type="OrthoDB" id="3177118at2"/>
<dbReference type="PhylomeDB" id="P9WMQ9"/>
<dbReference type="Proteomes" id="UP000001584">
    <property type="component" value="Chromosome"/>
</dbReference>
<dbReference type="GO" id="GO:0005886">
    <property type="term" value="C:plasma membrane"/>
    <property type="evidence" value="ECO:0007005"/>
    <property type="project" value="MTBBASE"/>
</dbReference>
<dbReference type="GO" id="GO:1990077">
    <property type="term" value="C:primosome complex"/>
    <property type="evidence" value="ECO:0007669"/>
    <property type="project" value="UniProtKB-UniRule"/>
</dbReference>
<dbReference type="GO" id="GO:0043138">
    <property type="term" value="F:3'-5' DNA helicase activity"/>
    <property type="evidence" value="ECO:0000318"/>
    <property type="project" value="GO_Central"/>
</dbReference>
<dbReference type="GO" id="GO:0005524">
    <property type="term" value="F:ATP binding"/>
    <property type="evidence" value="ECO:0007669"/>
    <property type="project" value="UniProtKB-UniRule"/>
</dbReference>
<dbReference type="GO" id="GO:0003677">
    <property type="term" value="F:DNA binding"/>
    <property type="evidence" value="ECO:0007669"/>
    <property type="project" value="UniProtKB-UniRule"/>
</dbReference>
<dbReference type="GO" id="GO:0016787">
    <property type="term" value="F:hydrolase activity"/>
    <property type="evidence" value="ECO:0007669"/>
    <property type="project" value="UniProtKB-KW"/>
</dbReference>
<dbReference type="GO" id="GO:0008270">
    <property type="term" value="F:zinc ion binding"/>
    <property type="evidence" value="ECO:0007669"/>
    <property type="project" value="UniProtKB-UniRule"/>
</dbReference>
<dbReference type="GO" id="GO:0006310">
    <property type="term" value="P:DNA recombination"/>
    <property type="evidence" value="ECO:0000318"/>
    <property type="project" value="GO_Central"/>
</dbReference>
<dbReference type="GO" id="GO:0006260">
    <property type="term" value="P:DNA replication"/>
    <property type="evidence" value="ECO:0000318"/>
    <property type="project" value="GO_Central"/>
</dbReference>
<dbReference type="GO" id="GO:0006270">
    <property type="term" value="P:DNA replication initiation"/>
    <property type="evidence" value="ECO:0000318"/>
    <property type="project" value="GO_Central"/>
</dbReference>
<dbReference type="GO" id="GO:0006269">
    <property type="term" value="P:DNA replication, synthesis of primer"/>
    <property type="evidence" value="ECO:0007669"/>
    <property type="project" value="UniProtKB-KW"/>
</dbReference>
<dbReference type="GO" id="GO:0006302">
    <property type="term" value="P:double-strand break repair"/>
    <property type="evidence" value="ECO:0000318"/>
    <property type="project" value="GO_Central"/>
</dbReference>
<dbReference type="FunFam" id="3.40.1440.60:FF:000002">
    <property type="entry name" value="Primosome assembly protein PriA"/>
    <property type="match status" value="1"/>
</dbReference>
<dbReference type="FunFam" id="3.40.50.300:FF:001817">
    <property type="entry name" value="Primosome assembly protein PriA"/>
    <property type="match status" value="1"/>
</dbReference>
<dbReference type="Gene3D" id="3.40.50.300">
    <property type="entry name" value="P-loop containing nucleotide triphosphate hydrolases"/>
    <property type="match status" value="1"/>
</dbReference>
<dbReference type="Gene3D" id="3.40.1440.60">
    <property type="entry name" value="PriA, 3(prime) DNA-binding domain"/>
    <property type="match status" value="1"/>
</dbReference>
<dbReference type="HAMAP" id="MF_00983">
    <property type="entry name" value="PriA"/>
    <property type="match status" value="1"/>
</dbReference>
<dbReference type="InterPro" id="IPR027417">
    <property type="entry name" value="P-loop_NTPase"/>
</dbReference>
<dbReference type="InterPro" id="IPR005259">
    <property type="entry name" value="PriA"/>
</dbReference>
<dbReference type="InterPro" id="IPR041222">
    <property type="entry name" value="PriA_3primeBD"/>
</dbReference>
<dbReference type="InterPro" id="IPR042115">
    <property type="entry name" value="PriA_3primeBD_sf"/>
</dbReference>
<dbReference type="InterPro" id="IPR050880">
    <property type="entry name" value="PriA_helicase"/>
</dbReference>
<dbReference type="NCBIfam" id="NF011454">
    <property type="entry name" value="PRK14873.1-4"/>
    <property type="match status" value="1"/>
</dbReference>
<dbReference type="PANTHER" id="PTHR30580">
    <property type="entry name" value="PRIMOSOMAL PROTEIN N"/>
    <property type="match status" value="1"/>
</dbReference>
<dbReference type="PANTHER" id="PTHR30580:SF0">
    <property type="entry name" value="PRIMOSOMAL PROTEIN N"/>
    <property type="match status" value="1"/>
</dbReference>
<dbReference type="Pfam" id="PF17764">
    <property type="entry name" value="PriA_3primeBD"/>
    <property type="match status" value="1"/>
</dbReference>
<keyword id="KW-0067">ATP-binding</keyword>
<keyword id="KW-0235">DNA replication</keyword>
<keyword id="KW-0238">DNA-binding</keyword>
<keyword id="KW-0479">Metal-binding</keyword>
<keyword id="KW-0547">Nucleotide-binding</keyword>
<keyword id="KW-0639">Primosome</keyword>
<keyword id="KW-1185">Reference proteome</keyword>
<keyword id="KW-0862">Zinc</keyword>
<sequence length="655" mass="69839">MLSVPHLDRDFDYLVPAEHSDDAQPGVRVRVRFHGRLVDGFVLERRSDSDHHGKLGWLDRVVSPEPVLTTEIRRLVDAVAARYAGTRQDVLRLAVPARHARVEREITTAPGRPVVAPVDPSGWAAYGRGRQFLAALADSRAARAVWQALPGELWADRFAEAAAQTVRAGRTVLAIVPDQRDLDTLWQAATALVDEHSVVALSAGLGPEARYRRWLAALRGSARLVIGTRSAVFAPLSELGLVMVWADADDSLAEPRAPYPHAREVAMLRAHQARCAALIGGYARTAEAHALVRSGWAHDVVAPRPEVRARSPRVVALDDSGYDDARDPAARTARLPSIALRAARSALQSGAPVLVQVPRRGYIPSLACGRCRAIARCRSCTGPLSLQGAGSPGAVCRWCGRVDPTLRCVRCGSDVVRAVVVGARRTAEELGRAFPGTAVITSAGDTLVPQLDAGPALVVATPGAEPRAPGGYGAALLLDSWALLGRQDLRAAEDALWRWMTAAALVRPRGAGGVVTVVAESSIPTVQSLIRWDPVGHAEAELAARTEVGLPPSVHIAALDGPAGTVTALLEAARLPDPDRLQADLLGPVDLPPGVRRPAGIPADAPVIRMLLRVCREQGLELAASLRRGIGVLSARQTRQTRSLVRVQIDPLHIG</sequence>
<reference key="1">
    <citation type="journal article" date="1998" name="Nature">
        <title>Deciphering the biology of Mycobacterium tuberculosis from the complete genome sequence.</title>
        <authorList>
            <person name="Cole S.T."/>
            <person name="Brosch R."/>
            <person name="Parkhill J."/>
            <person name="Garnier T."/>
            <person name="Churcher C.M."/>
            <person name="Harris D.E."/>
            <person name="Gordon S.V."/>
            <person name="Eiglmeier K."/>
            <person name="Gas S."/>
            <person name="Barry C.E. III"/>
            <person name="Tekaia F."/>
            <person name="Badcock K."/>
            <person name="Basham D."/>
            <person name="Brown D."/>
            <person name="Chillingworth T."/>
            <person name="Connor R."/>
            <person name="Davies R.M."/>
            <person name="Devlin K."/>
            <person name="Feltwell T."/>
            <person name="Gentles S."/>
            <person name="Hamlin N."/>
            <person name="Holroyd S."/>
            <person name="Hornsby T."/>
            <person name="Jagels K."/>
            <person name="Krogh A."/>
            <person name="McLean J."/>
            <person name="Moule S."/>
            <person name="Murphy L.D."/>
            <person name="Oliver S."/>
            <person name="Osborne J."/>
            <person name="Quail M.A."/>
            <person name="Rajandream M.A."/>
            <person name="Rogers J."/>
            <person name="Rutter S."/>
            <person name="Seeger K."/>
            <person name="Skelton S."/>
            <person name="Squares S."/>
            <person name="Squares R."/>
            <person name="Sulston J.E."/>
            <person name="Taylor K."/>
            <person name="Whitehead S."/>
            <person name="Barrell B.G."/>
        </authorList>
    </citation>
    <scope>NUCLEOTIDE SEQUENCE [LARGE SCALE GENOMIC DNA]</scope>
    <source>
        <strain>ATCC 25618 / H37Rv</strain>
    </source>
</reference>
<reference key="2">
    <citation type="journal article" date="2011" name="Mol. Cell. Proteomics">
        <title>Proteogenomic analysis of Mycobacterium tuberculosis by high resolution mass spectrometry.</title>
        <authorList>
            <person name="Kelkar D.S."/>
            <person name="Kumar D."/>
            <person name="Kumar P."/>
            <person name="Balakrishnan L."/>
            <person name="Muthusamy B."/>
            <person name="Yadav A.K."/>
            <person name="Shrivastava P."/>
            <person name="Marimuthu A."/>
            <person name="Anand S."/>
            <person name="Sundaram H."/>
            <person name="Kingsbury R."/>
            <person name="Harsha H.C."/>
            <person name="Nair B."/>
            <person name="Prasad T.S."/>
            <person name="Chauhan D.S."/>
            <person name="Katoch K."/>
            <person name="Katoch V.M."/>
            <person name="Kumar P."/>
            <person name="Chaerkady R."/>
            <person name="Ramachandran S."/>
            <person name="Dash D."/>
            <person name="Pandey A."/>
        </authorList>
    </citation>
    <scope>IDENTIFICATION BY MASS SPECTROMETRY [LARGE SCALE ANALYSIS]</scope>
    <source>
        <strain>ATCC 25618 / H37Rv</strain>
    </source>
</reference>
<proteinExistence type="evidence at protein level"/>
<comment type="function">
    <text evidence="1">Initiates the restart of stalled replication forks, which reloads the replicative helicase on sites other than the origin of replication. Recognizes and binds to abandoned replication forks and remodels them to uncover a helicase loading site. Promotes assembly of the primosome at these replication forks.</text>
</comment>
<comment type="cofactor">
    <cofactor evidence="1">
        <name>Zn(2+)</name>
        <dbReference type="ChEBI" id="CHEBI:29105"/>
    </cofactor>
    <text evidence="1">Binds 2 zinc ions per subunit.</text>
</comment>
<comment type="subunit">
    <text evidence="1">Component of the replication restart primosome.</text>
</comment>
<comment type="similarity">
    <text evidence="1">Belongs to the helicase family. PriA subfamily.</text>
</comment>
<comment type="caution">
    <text evidence="1">As this protein does not have any detectable helicase domains, it probably does not have helicase activity.</text>
</comment>
<accession>P9WMQ9</accession>
<accession>L0T6J5</accession>
<accession>P0A5A5</accession>
<accession>P71670</accession>